<keyword id="KW-0328">Glycosyltransferase</keyword>
<keyword id="KW-0460">Magnesium</keyword>
<keyword id="KW-0665">Pyrimidine biosynthesis</keyword>
<keyword id="KW-1185">Reference proteome</keyword>
<keyword id="KW-0808">Transferase</keyword>
<feature type="chain" id="PRO_1000138774" description="Orotate phosphoribosyltransferase">
    <location>
        <begin position="1"/>
        <end position="234"/>
    </location>
</feature>
<feature type="binding site" description="in other chain" evidence="1">
    <location>
        <position position="30"/>
    </location>
    <ligand>
        <name>5-phospho-alpha-D-ribose 1-diphosphate</name>
        <dbReference type="ChEBI" id="CHEBI:58017"/>
        <note>ligand shared between dimeric partners</note>
    </ligand>
</feature>
<feature type="binding site" evidence="1">
    <location>
        <begin position="38"/>
        <end position="39"/>
    </location>
    <ligand>
        <name>orotate</name>
        <dbReference type="ChEBI" id="CHEBI:30839"/>
    </ligand>
</feature>
<feature type="binding site" description="in other chain" evidence="1">
    <location>
        <begin position="76"/>
        <end position="77"/>
    </location>
    <ligand>
        <name>5-phospho-alpha-D-ribose 1-diphosphate</name>
        <dbReference type="ChEBI" id="CHEBI:58017"/>
        <note>ligand shared between dimeric partners</note>
    </ligand>
</feature>
<feature type="binding site" evidence="1">
    <location>
        <position position="103"/>
    </location>
    <ligand>
        <name>5-phospho-alpha-D-ribose 1-diphosphate</name>
        <dbReference type="ChEBI" id="CHEBI:58017"/>
        <note>ligand shared between dimeric partners</note>
    </ligand>
</feature>
<feature type="binding site" description="in other chain" evidence="1">
    <location>
        <position position="104"/>
    </location>
    <ligand>
        <name>5-phospho-alpha-D-ribose 1-diphosphate</name>
        <dbReference type="ChEBI" id="CHEBI:58017"/>
        <note>ligand shared between dimeric partners</note>
    </ligand>
</feature>
<feature type="binding site" evidence="1">
    <location>
        <position position="107"/>
    </location>
    <ligand>
        <name>5-phospho-alpha-D-ribose 1-diphosphate</name>
        <dbReference type="ChEBI" id="CHEBI:58017"/>
        <note>ligand shared between dimeric partners</note>
    </ligand>
</feature>
<feature type="binding site" evidence="1">
    <location>
        <position position="109"/>
    </location>
    <ligand>
        <name>5-phospho-alpha-D-ribose 1-diphosphate</name>
        <dbReference type="ChEBI" id="CHEBI:58017"/>
        <note>ligand shared between dimeric partners</note>
    </ligand>
</feature>
<feature type="binding site" description="in other chain" evidence="1">
    <location>
        <begin position="128"/>
        <end position="136"/>
    </location>
    <ligand>
        <name>5-phospho-alpha-D-ribose 1-diphosphate</name>
        <dbReference type="ChEBI" id="CHEBI:58017"/>
        <note>ligand shared between dimeric partners</note>
    </ligand>
</feature>
<feature type="binding site" evidence="1">
    <location>
        <position position="132"/>
    </location>
    <ligand>
        <name>orotate</name>
        <dbReference type="ChEBI" id="CHEBI:30839"/>
    </ligand>
</feature>
<feature type="binding site" evidence="1">
    <location>
        <position position="160"/>
    </location>
    <ligand>
        <name>orotate</name>
        <dbReference type="ChEBI" id="CHEBI:30839"/>
    </ligand>
</feature>
<gene>
    <name evidence="1" type="primary">pyrE</name>
    <name type="ordered locus">Csal_3204</name>
</gene>
<evidence type="ECO:0000255" key="1">
    <source>
        <dbReference type="HAMAP-Rule" id="MF_01208"/>
    </source>
</evidence>
<proteinExistence type="inferred from homology"/>
<sequence>MTAQLQPYQREFIEFAIDEGVLKFGEFTLKSGRISPYFFNAGLFKSGRALARLGRFYAQAIAHSGLEADVLFGPAYKGIPLATTTAVALADHHDRDLPFAFNRKEAKAHGEGGNIVGAALAGRVLIIDDVITAGTAIREVMQLIDAAGAEAAGVVIALDRQERGQDENGLKAQSAIQEVTSQYGMPVVSIVTLDQVLAYLETRQSQGDESDQSLRQHADAIRAYRDRYGVRLDG</sequence>
<comment type="function">
    <text evidence="1">Catalyzes the transfer of a ribosyl phosphate group from 5-phosphoribose 1-diphosphate to orotate, leading to the formation of orotidine monophosphate (OMP).</text>
</comment>
<comment type="catalytic activity">
    <reaction evidence="1">
        <text>orotidine 5'-phosphate + diphosphate = orotate + 5-phospho-alpha-D-ribose 1-diphosphate</text>
        <dbReference type="Rhea" id="RHEA:10380"/>
        <dbReference type="ChEBI" id="CHEBI:30839"/>
        <dbReference type="ChEBI" id="CHEBI:33019"/>
        <dbReference type="ChEBI" id="CHEBI:57538"/>
        <dbReference type="ChEBI" id="CHEBI:58017"/>
        <dbReference type="EC" id="2.4.2.10"/>
    </reaction>
</comment>
<comment type="cofactor">
    <cofactor evidence="1">
        <name>Mg(2+)</name>
        <dbReference type="ChEBI" id="CHEBI:18420"/>
    </cofactor>
</comment>
<comment type="pathway">
    <text evidence="1">Pyrimidine metabolism; UMP biosynthesis via de novo pathway; UMP from orotate: step 1/2.</text>
</comment>
<comment type="subunit">
    <text evidence="1">Homodimer.</text>
</comment>
<comment type="similarity">
    <text evidence="1">Belongs to the purine/pyrimidine phosphoribosyltransferase family. PyrE subfamily.</text>
</comment>
<accession>Q1QSL0</accession>
<name>PYRE_CHRSD</name>
<dbReference type="EC" id="2.4.2.10" evidence="1"/>
<dbReference type="EMBL" id="CP000285">
    <property type="protein sequence ID" value="ABE60548.1"/>
    <property type="molecule type" value="Genomic_DNA"/>
</dbReference>
<dbReference type="RefSeq" id="WP_011508494.1">
    <property type="nucleotide sequence ID" value="NC_007963.1"/>
</dbReference>
<dbReference type="SMR" id="Q1QSL0"/>
<dbReference type="STRING" id="290398.Csal_3204"/>
<dbReference type="GeneID" id="95335898"/>
<dbReference type="KEGG" id="csa:Csal_3204"/>
<dbReference type="eggNOG" id="COG0461">
    <property type="taxonomic scope" value="Bacteria"/>
</dbReference>
<dbReference type="HOGENOM" id="CLU_074878_0_1_6"/>
<dbReference type="OrthoDB" id="9779060at2"/>
<dbReference type="UniPathway" id="UPA00070">
    <property type="reaction ID" value="UER00119"/>
</dbReference>
<dbReference type="Proteomes" id="UP000000239">
    <property type="component" value="Chromosome"/>
</dbReference>
<dbReference type="GO" id="GO:0005737">
    <property type="term" value="C:cytoplasm"/>
    <property type="evidence" value="ECO:0007669"/>
    <property type="project" value="TreeGrafter"/>
</dbReference>
<dbReference type="GO" id="GO:0000287">
    <property type="term" value="F:magnesium ion binding"/>
    <property type="evidence" value="ECO:0007669"/>
    <property type="project" value="UniProtKB-UniRule"/>
</dbReference>
<dbReference type="GO" id="GO:0004588">
    <property type="term" value="F:orotate phosphoribosyltransferase activity"/>
    <property type="evidence" value="ECO:0007669"/>
    <property type="project" value="UniProtKB-UniRule"/>
</dbReference>
<dbReference type="GO" id="GO:0006207">
    <property type="term" value="P:'de novo' pyrimidine nucleobase biosynthetic process"/>
    <property type="evidence" value="ECO:0007669"/>
    <property type="project" value="TreeGrafter"/>
</dbReference>
<dbReference type="GO" id="GO:0044205">
    <property type="term" value="P:'de novo' UMP biosynthetic process"/>
    <property type="evidence" value="ECO:0007669"/>
    <property type="project" value="UniProtKB-UniRule"/>
</dbReference>
<dbReference type="GO" id="GO:0046132">
    <property type="term" value="P:pyrimidine ribonucleoside biosynthetic process"/>
    <property type="evidence" value="ECO:0007669"/>
    <property type="project" value="TreeGrafter"/>
</dbReference>
<dbReference type="CDD" id="cd06223">
    <property type="entry name" value="PRTases_typeI"/>
    <property type="match status" value="1"/>
</dbReference>
<dbReference type="FunFam" id="3.40.50.2020:FF:000008">
    <property type="entry name" value="Orotate phosphoribosyltransferase"/>
    <property type="match status" value="1"/>
</dbReference>
<dbReference type="Gene3D" id="3.40.50.2020">
    <property type="match status" value="1"/>
</dbReference>
<dbReference type="HAMAP" id="MF_01208">
    <property type="entry name" value="PyrE"/>
    <property type="match status" value="1"/>
</dbReference>
<dbReference type="InterPro" id="IPR023031">
    <property type="entry name" value="OPRT"/>
</dbReference>
<dbReference type="InterPro" id="IPR004467">
    <property type="entry name" value="Or_phspho_trans_dom"/>
</dbReference>
<dbReference type="InterPro" id="IPR000836">
    <property type="entry name" value="PRibTrfase_dom"/>
</dbReference>
<dbReference type="InterPro" id="IPR029057">
    <property type="entry name" value="PRTase-like"/>
</dbReference>
<dbReference type="NCBIfam" id="TIGR00336">
    <property type="entry name" value="pyrE"/>
    <property type="match status" value="1"/>
</dbReference>
<dbReference type="PANTHER" id="PTHR46683">
    <property type="entry name" value="OROTATE PHOSPHORIBOSYLTRANSFERASE 1-RELATED"/>
    <property type="match status" value="1"/>
</dbReference>
<dbReference type="PANTHER" id="PTHR46683:SF1">
    <property type="entry name" value="OROTATE PHOSPHORIBOSYLTRANSFERASE 1-RELATED"/>
    <property type="match status" value="1"/>
</dbReference>
<dbReference type="Pfam" id="PF00156">
    <property type="entry name" value="Pribosyltran"/>
    <property type="match status" value="1"/>
</dbReference>
<dbReference type="SUPFAM" id="SSF53271">
    <property type="entry name" value="PRTase-like"/>
    <property type="match status" value="1"/>
</dbReference>
<dbReference type="PROSITE" id="PS00103">
    <property type="entry name" value="PUR_PYR_PR_TRANSFER"/>
    <property type="match status" value="1"/>
</dbReference>
<organism>
    <name type="scientific">Chromohalobacter salexigens (strain ATCC BAA-138 / DSM 3043 / CIP 106854 / NCIMB 13768 / 1H11)</name>
    <dbReference type="NCBI Taxonomy" id="290398"/>
    <lineage>
        <taxon>Bacteria</taxon>
        <taxon>Pseudomonadati</taxon>
        <taxon>Pseudomonadota</taxon>
        <taxon>Gammaproteobacteria</taxon>
        <taxon>Oceanospirillales</taxon>
        <taxon>Halomonadaceae</taxon>
        <taxon>Chromohalobacter</taxon>
    </lineage>
</organism>
<reference key="1">
    <citation type="journal article" date="2011" name="Stand. Genomic Sci.">
        <title>Complete genome sequence of the halophilic and highly halotolerant Chromohalobacter salexigens type strain (1H11(T)).</title>
        <authorList>
            <person name="Copeland A."/>
            <person name="O'Connor K."/>
            <person name="Lucas S."/>
            <person name="Lapidus A."/>
            <person name="Berry K.W."/>
            <person name="Detter J.C."/>
            <person name="Del Rio T.G."/>
            <person name="Hammon N."/>
            <person name="Dalin E."/>
            <person name="Tice H."/>
            <person name="Pitluck S."/>
            <person name="Bruce D."/>
            <person name="Goodwin L."/>
            <person name="Han C."/>
            <person name="Tapia R."/>
            <person name="Saunders E."/>
            <person name="Schmutz J."/>
            <person name="Brettin T."/>
            <person name="Larimer F."/>
            <person name="Land M."/>
            <person name="Hauser L."/>
            <person name="Vargas C."/>
            <person name="Nieto J.J."/>
            <person name="Kyrpides N.C."/>
            <person name="Ivanova N."/>
            <person name="Goker M."/>
            <person name="Klenk H.P."/>
            <person name="Csonka L.N."/>
            <person name="Woyke T."/>
        </authorList>
    </citation>
    <scope>NUCLEOTIDE SEQUENCE [LARGE SCALE GENOMIC DNA]</scope>
    <source>
        <strain>ATCC BAA-138 / DSM 3043 / CIP 106854 / NCIMB 13768 / 1H11</strain>
    </source>
</reference>
<protein>
    <recommendedName>
        <fullName evidence="1">Orotate phosphoribosyltransferase</fullName>
        <shortName evidence="1">OPRT</shortName>
        <shortName evidence="1">OPRTase</shortName>
        <ecNumber evidence="1">2.4.2.10</ecNumber>
    </recommendedName>
</protein>